<proteinExistence type="inferred from homology"/>
<feature type="chain" id="PRO_0000270672" description="Large ribosomal subunit protein bL21">
    <location>
        <begin position="1"/>
        <end position="104"/>
    </location>
</feature>
<protein>
    <recommendedName>
        <fullName evidence="1">Large ribosomal subunit protein bL21</fullName>
    </recommendedName>
    <alternativeName>
        <fullName evidence="2">50S ribosomal protein L21</fullName>
    </alternativeName>
</protein>
<comment type="function">
    <text evidence="1">This protein binds to 23S rRNA in the presence of protein L20.</text>
</comment>
<comment type="subunit">
    <text evidence="1">Part of the 50S ribosomal subunit. Contacts protein L20.</text>
</comment>
<comment type="similarity">
    <text evidence="1">Belongs to the bacterial ribosomal protein bL21 family.</text>
</comment>
<comment type="sequence caution" evidence="2">
    <conflict type="erroneous initiation">
        <sequence resource="EMBL-CDS" id="ABI62601"/>
    </conflict>
</comment>
<dbReference type="EMBL" id="CP000394">
    <property type="protein sequence ID" value="ABI62601.1"/>
    <property type="status" value="ALT_INIT"/>
    <property type="molecule type" value="Genomic_DNA"/>
</dbReference>
<dbReference type="RefSeq" id="WP_025287092.1">
    <property type="nucleotide sequence ID" value="NC_008343.2"/>
</dbReference>
<dbReference type="SMR" id="Q0BRF1"/>
<dbReference type="STRING" id="391165.GbCGDNIH1_1703"/>
<dbReference type="GeneID" id="69745920"/>
<dbReference type="KEGG" id="gbe:GbCGDNIH1_1703"/>
<dbReference type="eggNOG" id="COG0261">
    <property type="taxonomic scope" value="Bacteria"/>
</dbReference>
<dbReference type="HOGENOM" id="CLU_061463_3_2_5"/>
<dbReference type="OrthoDB" id="9813334at2"/>
<dbReference type="Proteomes" id="UP000001963">
    <property type="component" value="Chromosome"/>
</dbReference>
<dbReference type="GO" id="GO:0005737">
    <property type="term" value="C:cytoplasm"/>
    <property type="evidence" value="ECO:0007669"/>
    <property type="project" value="UniProtKB-ARBA"/>
</dbReference>
<dbReference type="GO" id="GO:1990904">
    <property type="term" value="C:ribonucleoprotein complex"/>
    <property type="evidence" value="ECO:0007669"/>
    <property type="project" value="UniProtKB-KW"/>
</dbReference>
<dbReference type="GO" id="GO:0005840">
    <property type="term" value="C:ribosome"/>
    <property type="evidence" value="ECO:0007669"/>
    <property type="project" value="UniProtKB-KW"/>
</dbReference>
<dbReference type="GO" id="GO:0019843">
    <property type="term" value="F:rRNA binding"/>
    <property type="evidence" value="ECO:0007669"/>
    <property type="project" value="UniProtKB-UniRule"/>
</dbReference>
<dbReference type="GO" id="GO:0003735">
    <property type="term" value="F:structural constituent of ribosome"/>
    <property type="evidence" value="ECO:0007669"/>
    <property type="project" value="InterPro"/>
</dbReference>
<dbReference type="GO" id="GO:0006412">
    <property type="term" value="P:translation"/>
    <property type="evidence" value="ECO:0007669"/>
    <property type="project" value="UniProtKB-UniRule"/>
</dbReference>
<dbReference type="HAMAP" id="MF_01363">
    <property type="entry name" value="Ribosomal_bL21"/>
    <property type="match status" value="1"/>
</dbReference>
<dbReference type="InterPro" id="IPR028909">
    <property type="entry name" value="bL21-like"/>
</dbReference>
<dbReference type="InterPro" id="IPR036164">
    <property type="entry name" value="bL21-like_sf"/>
</dbReference>
<dbReference type="InterPro" id="IPR001787">
    <property type="entry name" value="Ribosomal_bL21"/>
</dbReference>
<dbReference type="NCBIfam" id="TIGR00061">
    <property type="entry name" value="L21"/>
    <property type="match status" value="1"/>
</dbReference>
<dbReference type="PANTHER" id="PTHR21349">
    <property type="entry name" value="50S RIBOSOMAL PROTEIN L21"/>
    <property type="match status" value="1"/>
</dbReference>
<dbReference type="PANTHER" id="PTHR21349:SF0">
    <property type="entry name" value="LARGE RIBOSOMAL SUBUNIT PROTEIN BL21M"/>
    <property type="match status" value="1"/>
</dbReference>
<dbReference type="Pfam" id="PF00829">
    <property type="entry name" value="Ribosomal_L21p"/>
    <property type="match status" value="1"/>
</dbReference>
<dbReference type="SUPFAM" id="SSF141091">
    <property type="entry name" value="L21p-like"/>
    <property type="match status" value="1"/>
</dbReference>
<name>RL21_GRABC</name>
<organism>
    <name type="scientific">Granulibacter bethesdensis (strain ATCC BAA-1260 / CGDNIH1)</name>
    <dbReference type="NCBI Taxonomy" id="391165"/>
    <lineage>
        <taxon>Bacteria</taxon>
        <taxon>Pseudomonadati</taxon>
        <taxon>Pseudomonadota</taxon>
        <taxon>Alphaproteobacteria</taxon>
        <taxon>Acetobacterales</taxon>
        <taxon>Acetobacteraceae</taxon>
        <taxon>Granulibacter</taxon>
    </lineage>
</organism>
<accession>Q0BRF1</accession>
<sequence length="104" mass="11192">MFAVIRTGGKQYRVTPNAVLKVEKLEAEPGSTITFTDVLAVGGEGNLTIGAPVVAGASVTATVIAQDRLDKIVVFKKRRRQNSRRKNGHRQHVTVLRVGDIVAA</sequence>
<keyword id="KW-1185">Reference proteome</keyword>
<keyword id="KW-0687">Ribonucleoprotein</keyword>
<keyword id="KW-0689">Ribosomal protein</keyword>
<keyword id="KW-0694">RNA-binding</keyword>
<keyword id="KW-0699">rRNA-binding</keyword>
<evidence type="ECO:0000255" key="1">
    <source>
        <dbReference type="HAMAP-Rule" id="MF_01363"/>
    </source>
</evidence>
<evidence type="ECO:0000305" key="2"/>
<gene>
    <name evidence="1" type="primary">rplU</name>
    <name type="ordered locus">GbCGDNIH1_1703</name>
</gene>
<reference key="1">
    <citation type="journal article" date="2007" name="J. Bacteriol.">
        <title>Genome sequence analysis of the emerging human pathogenic acetic acid bacterium Granulibacter bethesdensis.</title>
        <authorList>
            <person name="Greenberg D.E."/>
            <person name="Porcella S.F."/>
            <person name="Zelazny A.M."/>
            <person name="Virtaneva K."/>
            <person name="Sturdevant D.E."/>
            <person name="Kupko J.J. III"/>
            <person name="Barbian K.D."/>
            <person name="Babar A."/>
            <person name="Dorward D.W."/>
            <person name="Holland S.M."/>
        </authorList>
    </citation>
    <scope>NUCLEOTIDE SEQUENCE [LARGE SCALE GENOMIC DNA]</scope>
    <source>
        <strain>ATCC BAA-1260 / CGDNIH1</strain>
    </source>
</reference>